<accession>P66528</accession>
<accession>Q9A0H1</accession>
<protein>
    <recommendedName>
        <fullName evidence="1">Small ribosomal subunit protein bS21</fullName>
    </recommendedName>
    <alternativeName>
        <fullName evidence="3">30S ribosomal protein S21</fullName>
    </alternativeName>
</protein>
<dbReference type="EMBL" id="AE009949">
    <property type="protein sequence ID" value="AAL97498.1"/>
    <property type="molecule type" value="Genomic_DNA"/>
</dbReference>
<dbReference type="RefSeq" id="WP_000048058.1">
    <property type="nucleotide sequence ID" value="NC_003485.1"/>
</dbReference>
<dbReference type="SMR" id="P66528"/>
<dbReference type="GeneID" id="93936799"/>
<dbReference type="KEGG" id="spm:spyM18_0838"/>
<dbReference type="HOGENOM" id="CLU_159258_3_2_9"/>
<dbReference type="GO" id="GO:1990904">
    <property type="term" value="C:ribonucleoprotein complex"/>
    <property type="evidence" value="ECO:0007669"/>
    <property type="project" value="UniProtKB-KW"/>
</dbReference>
<dbReference type="GO" id="GO:0005840">
    <property type="term" value="C:ribosome"/>
    <property type="evidence" value="ECO:0007669"/>
    <property type="project" value="UniProtKB-KW"/>
</dbReference>
<dbReference type="GO" id="GO:0003735">
    <property type="term" value="F:structural constituent of ribosome"/>
    <property type="evidence" value="ECO:0007669"/>
    <property type="project" value="InterPro"/>
</dbReference>
<dbReference type="GO" id="GO:0006412">
    <property type="term" value="P:translation"/>
    <property type="evidence" value="ECO:0007669"/>
    <property type="project" value="UniProtKB-UniRule"/>
</dbReference>
<dbReference type="Gene3D" id="1.20.5.1150">
    <property type="entry name" value="Ribosomal protein S8"/>
    <property type="match status" value="1"/>
</dbReference>
<dbReference type="HAMAP" id="MF_00358">
    <property type="entry name" value="Ribosomal_bS21"/>
    <property type="match status" value="1"/>
</dbReference>
<dbReference type="InterPro" id="IPR001911">
    <property type="entry name" value="Ribosomal_bS21"/>
</dbReference>
<dbReference type="InterPro" id="IPR018278">
    <property type="entry name" value="Ribosomal_bS21_CS"/>
</dbReference>
<dbReference type="InterPro" id="IPR038380">
    <property type="entry name" value="Ribosomal_bS21_sf"/>
</dbReference>
<dbReference type="NCBIfam" id="TIGR00030">
    <property type="entry name" value="S21p"/>
    <property type="match status" value="1"/>
</dbReference>
<dbReference type="PANTHER" id="PTHR21109">
    <property type="entry name" value="MITOCHONDRIAL 28S RIBOSOMAL PROTEIN S21"/>
    <property type="match status" value="1"/>
</dbReference>
<dbReference type="PANTHER" id="PTHR21109:SF22">
    <property type="entry name" value="SMALL RIBOSOMAL SUBUNIT PROTEIN BS21"/>
    <property type="match status" value="1"/>
</dbReference>
<dbReference type="Pfam" id="PF01165">
    <property type="entry name" value="Ribosomal_S21"/>
    <property type="match status" value="1"/>
</dbReference>
<dbReference type="PRINTS" id="PR00976">
    <property type="entry name" value="RIBOSOMALS21"/>
</dbReference>
<dbReference type="PROSITE" id="PS01181">
    <property type="entry name" value="RIBOSOMAL_S21"/>
    <property type="match status" value="1"/>
</dbReference>
<organism>
    <name type="scientific">Streptococcus pyogenes serotype M18 (strain MGAS8232)</name>
    <dbReference type="NCBI Taxonomy" id="186103"/>
    <lineage>
        <taxon>Bacteria</taxon>
        <taxon>Bacillati</taxon>
        <taxon>Bacillota</taxon>
        <taxon>Bacilli</taxon>
        <taxon>Lactobacillales</taxon>
        <taxon>Streptococcaceae</taxon>
        <taxon>Streptococcus</taxon>
    </lineage>
</organism>
<evidence type="ECO:0000255" key="1">
    <source>
        <dbReference type="HAMAP-Rule" id="MF_00358"/>
    </source>
</evidence>
<evidence type="ECO:0000256" key="2">
    <source>
        <dbReference type="SAM" id="MobiDB-lite"/>
    </source>
</evidence>
<evidence type="ECO:0000305" key="3"/>
<keyword id="KW-0687">Ribonucleoprotein</keyword>
<keyword id="KW-0689">Ribosomal protein</keyword>
<proteinExistence type="inferred from homology"/>
<name>RS21_STRP8</name>
<sequence>MSKTVVRKNESLDDALRRFKRSVTKAGTLQESRKREFYEKPSVKRKRKSEAARKRKKF</sequence>
<reference key="1">
    <citation type="journal article" date="2002" name="Proc. Natl. Acad. Sci. U.S.A.">
        <title>Genome sequence and comparative microarray analysis of serotype M18 group A Streptococcus strains associated with acute rheumatic fever outbreaks.</title>
        <authorList>
            <person name="Smoot J.C."/>
            <person name="Barbian K.D."/>
            <person name="Van Gompel J.J."/>
            <person name="Smoot L.M."/>
            <person name="Chaussee M.S."/>
            <person name="Sylva G.L."/>
            <person name="Sturdevant D.E."/>
            <person name="Ricklefs S.M."/>
            <person name="Porcella S.F."/>
            <person name="Parkins L.D."/>
            <person name="Beres S.B."/>
            <person name="Campbell D.S."/>
            <person name="Smith T.M."/>
            <person name="Zhang Q."/>
            <person name="Kapur V."/>
            <person name="Daly J.A."/>
            <person name="Veasy L.G."/>
            <person name="Musser J.M."/>
        </authorList>
    </citation>
    <scope>NUCLEOTIDE SEQUENCE [LARGE SCALE GENOMIC DNA]</scope>
    <source>
        <strain>MGAS8232</strain>
    </source>
</reference>
<gene>
    <name evidence="1" type="primary">rpsU</name>
    <name type="ordered locus">spyM18_0838</name>
</gene>
<comment type="similarity">
    <text evidence="1">Belongs to the bacterial ribosomal protein bS21 family.</text>
</comment>
<feature type="chain" id="PRO_0000178386" description="Small ribosomal subunit protein bS21">
    <location>
        <begin position="1"/>
        <end position="58"/>
    </location>
</feature>
<feature type="region of interest" description="Disordered" evidence="2">
    <location>
        <begin position="36"/>
        <end position="58"/>
    </location>
</feature>
<feature type="compositionally biased region" description="Basic residues" evidence="2">
    <location>
        <begin position="43"/>
        <end position="58"/>
    </location>
</feature>